<name>DF145_ARATH</name>
<keyword id="KW-0929">Antimicrobial</keyword>
<keyword id="KW-1015">Disulfide bond</keyword>
<keyword id="KW-0295">Fungicide</keyword>
<keyword id="KW-0325">Glycoprotein</keyword>
<keyword id="KW-0611">Plant defense</keyword>
<keyword id="KW-1185">Reference proteome</keyword>
<keyword id="KW-0964">Secreted</keyword>
<keyword id="KW-0732">Signal</keyword>
<accession>P82717</accession>
<reference evidence="4" key="1">
    <citation type="journal article" date="1999" name="Nature">
        <title>Sequence and analysis of chromosome 4 of the plant Arabidopsis thaliana.</title>
        <authorList>
            <person name="Mayer K.F.X."/>
            <person name="Schueller C."/>
            <person name="Wambutt R."/>
            <person name="Murphy G."/>
            <person name="Volckaert G."/>
            <person name="Pohl T."/>
            <person name="Duesterhoeft A."/>
            <person name="Stiekema W."/>
            <person name="Entian K.-D."/>
            <person name="Terryn N."/>
            <person name="Harris B."/>
            <person name="Ansorge W."/>
            <person name="Brandt P."/>
            <person name="Grivell L.A."/>
            <person name="Rieger M."/>
            <person name="Weichselgartner M."/>
            <person name="de Simone V."/>
            <person name="Obermaier B."/>
            <person name="Mache R."/>
            <person name="Mueller M."/>
            <person name="Kreis M."/>
            <person name="Delseny M."/>
            <person name="Puigdomenech P."/>
            <person name="Watson M."/>
            <person name="Schmidtheini T."/>
            <person name="Reichert B."/>
            <person name="Portetelle D."/>
            <person name="Perez-Alonso M."/>
            <person name="Boutry M."/>
            <person name="Bancroft I."/>
            <person name="Vos P."/>
            <person name="Hoheisel J."/>
            <person name="Zimmermann W."/>
            <person name="Wedler H."/>
            <person name="Ridley P."/>
            <person name="Langham S.-A."/>
            <person name="McCullagh B."/>
            <person name="Bilham L."/>
            <person name="Robben J."/>
            <person name="van der Schueren J."/>
            <person name="Grymonprez B."/>
            <person name="Chuang Y.-J."/>
            <person name="Vandenbussche F."/>
            <person name="Braeken M."/>
            <person name="Weltjens I."/>
            <person name="Voet M."/>
            <person name="Bastiaens I."/>
            <person name="Aert R."/>
            <person name="Defoor E."/>
            <person name="Weitzenegger T."/>
            <person name="Bothe G."/>
            <person name="Ramsperger U."/>
            <person name="Hilbert H."/>
            <person name="Braun M."/>
            <person name="Holzer E."/>
            <person name="Brandt A."/>
            <person name="Peters S."/>
            <person name="van Staveren M."/>
            <person name="Dirkse W."/>
            <person name="Mooijman P."/>
            <person name="Klein Lankhorst R."/>
            <person name="Rose M."/>
            <person name="Hauf J."/>
            <person name="Koetter P."/>
            <person name="Berneiser S."/>
            <person name="Hempel S."/>
            <person name="Feldpausch M."/>
            <person name="Lamberth S."/>
            <person name="Van den Daele H."/>
            <person name="De Keyser A."/>
            <person name="Buysshaert C."/>
            <person name="Gielen J."/>
            <person name="Villarroel R."/>
            <person name="De Clercq R."/>
            <person name="van Montagu M."/>
            <person name="Rogers J."/>
            <person name="Cronin A."/>
            <person name="Quail M.A."/>
            <person name="Bray-Allen S."/>
            <person name="Clark L."/>
            <person name="Doggett J."/>
            <person name="Hall S."/>
            <person name="Kay M."/>
            <person name="Lennard N."/>
            <person name="McLay K."/>
            <person name="Mayes R."/>
            <person name="Pettett A."/>
            <person name="Rajandream M.A."/>
            <person name="Lyne M."/>
            <person name="Benes V."/>
            <person name="Rechmann S."/>
            <person name="Borkova D."/>
            <person name="Bloecker H."/>
            <person name="Scharfe M."/>
            <person name="Grimm M."/>
            <person name="Loehnert T.-H."/>
            <person name="Dose S."/>
            <person name="de Haan M."/>
            <person name="Maarse A.C."/>
            <person name="Schaefer M."/>
            <person name="Mueller-Auer S."/>
            <person name="Gabel C."/>
            <person name="Fuchs M."/>
            <person name="Fartmann B."/>
            <person name="Granderath K."/>
            <person name="Dauner D."/>
            <person name="Herzl A."/>
            <person name="Neumann S."/>
            <person name="Argiriou A."/>
            <person name="Vitale D."/>
            <person name="Liguori R."/>
            <person name="Piravandi E."/>
            <person name="Massenet O."/>
            <person name="Quigley F."/>
            <person name="Clabauld G."/>
            <person name="Muendlein A."/>
            <person name="Felber R."/>
            <person name="Schnabl S."/>
            <person name="Hiller R."/>
            <person name="Schmidt W."/>
            <person name="Lecharny A."/>
            <person name="Aubourg S."/>
            <person name="Chefdor F."/>
            <person name="Cooke R."/>
            <person name="Berger C."/>
            <person name="Monfort A."/>
            <person name="Casacuberta E."/>
            <person name="Gibbons T."/>
            <person name="Weber N."/>
            <person name="Vandenbol M."/>
            <person name="Bargues M."/>
            <person name="Terol J."/>
            <person name="Torres A."/>
            <person name="Perez-Perez A."/>
            <person name="Purnelle B."/>
            <person name="Bent E."/>
            <person name="Johnson S."/>
            <person name="Tacon D."/>
            <person name="Jesse T."/>
            <person name="Heijnen L."/>
            <person name="Schwarz S."/>
            <person name="Scholler P."/>
            <person name="Heber S."/>
            <person name="Francs P."/>
            <person name="Bielke C."/>
            <person name="Frishman D."/>
            <person name="Haase D."/>
            <person name="Lemcke K."/>
            <person name="Mewes H.-W."/>
            <person name="Stocker S."/>
            <person name="Zaccaria P."/>
            <person name="Bevan M."/>
            <person name="Wilson R.K."/>
            <person name="de la Bastide M."/>
            <person name="Habermann K."/>
            <person name="Parnell L."/>
            <person name="Dedhia N."/>
            <person name="Gnoj L."/>
            <person name="Schutz K."/>
            <person name="Huang E."/>
            <person name="Spiegel L."/>
            <person name="Sekhon M."/>
            <person name="Murray J."/>
            <person name="Sheet P."/>
            <person name="Cordes M."/>
            <person name="Abu-Threideh J."/>
            <person name="Stoneking T."/>
            <person name="Kalicki J."/>
            <person name="Graves T."/>
            <person name="Harmon G."/>
            <person name="Edwards J."/>
            <person name="Latreille P."/>
            <person name="Courtney L."/>
            <person name="Cloud J."/>
            <person name="Abbott A."/>
            <person name="Scott K."/>
            <person name="Johnson D."/>
            <person name="Minx P."/>
            <person name="Bentley D."/>
            <person name="Fulton B."/>
            <person name="Miller N."/>
            <person name="Greco T."/>
            <person name="Kemp K."/>
            <person name="Kramer J."/>
            <person name="Fulton L."/>
            <person name="Mardis E."/>
            <person name="Dante M."/>
            <person name="Pepin K."/>
            <person name="Hillier L.W."/>
            <person name="Nelson J."/>
            <person name="Spieth J."/>
            <person name="Ryan E."/>
            <person name="Andrews S."/>
            <person name="Geisel C."/>
            <person name="Layman D."/>
            <person name="Du H."/>
            <person name="Ali J."/>
            <person name="Berghoff A."/>
            <person name="Jones K."/>
            <person name="Drone K."/>
            <person name="Cotton M."/>
            <person name="Joshu C."/>
            <person name="Antonoiu B."/>
            <person name="Zidanic M."/>
            <person name="Strong C."/>
            <person name="Sun H."/>
            <person name="Lamar B."/>
            <person name="Yordan C."/>
            <person name="Ma P."/>
            <person name="Zhong J."/>
            <person name="Preston R."/>
            <person name="Vil D."/>
            <person name="Shekher M."/>
            <person name="Matero A."/>
            <person name="Shah R."/>
            <person name="Swaby I.K."/>
            <person name="O'Shaughnessy A."/>
            <person name="Rodriguez M."/>
            <person name="Hoffman J."/>
            <person name="Till S."/>
            <person name="Granat S."/>
            <person name="Shohdy N."/>
            <person name="Hasegawa A."/>
            <person name="Hameed A."/>
            <person name="Lodhi M."/>
            <person name="Johnson A."/>
            <person name="Chen E."/>
            <person name="Marra M.A."/>
            <person name="Martienssen R."/>
            <person name="McCombie W.R."/>
        </authorList>
    </citation>
    <scope>NUCLEOTIDE SEQUENCE [LARGE SCALE GENOMIC DNA]</scope>
    <source>
        <strain>cv. Columbia</strain>
    </source>
</reference>
<reference key="2">
    <citation type="journal article" date="2017" name="Plant J.">
        <title>Araport11: a complete reannotation of the Arabidopsis thaliana reference genome.</title>
        <authorList>
            <person name="Cheng C.Y."/>
            <person name="Krishnakumar V."/>
            <person name="Chan A.P."/>
            <person name="Thibaud-Nissen F."/>
            <person name="Schobel S."/>
            <person name="Town C.D."/>
        </authorList>
    </citation>
    <scope>GENOME REANNOTATION</scope>
    <source>
        <strain>cv. Columbia</strain>
    </source>
</reference>
<reference evidence="4" key="3">
    <citation type="journal article" date="2001" name="Plant Mol. Biol.">
        <title>Two large Arabidopsis thaliana gene families are homologous to the Brassica gene superfamily that encodes pollen coat proteins and the male component of the self-incompatibility response.</title>
        <authorList>
            <person name="Vanoosthuyse V."/>
            <person name="Miege C."/>
            <person name="Dumas C."/>
            <person name="Cock J.M."/>
        </authorList>
    </citation>
    <scope>IDENTIFICATION</scope>
</reference>
<reference key="4">
    <citation type="journal article" date="2005" name="Plant Physiol.">
        <title>Genome organization of more than 300 defensin-like genes in Arabidopsis.</title>
        <authorList>
            <person name="Silverstein K.A.T."/>
            <person name="Graham M.A."/>
            <person name="Paape T.D."/>
            <person name="VandenBosch K.A."/>
        </authorList>
    </citation>
    <scope>GENE FAMILY</scope>
</reference>
<proteinExistence type="inferred from homology"/>
<comment type="subcellular location">
    <subcellularLocation>
        <location evidence="1">Secreted</location>
    </subcellularLocation>
</comment>
<comment type="similarity">
    <text evidence="4">Belongs to the DEFL family.</text>
</comment>
<dbReference type="EMBL" id="AL049523">
    <property type="status" value="NOT_ANNOTATED_CDS"/>
    <property type="molecule type" value="Genomic_DNA"/>
</dbReference>
<dbReference type="EMBL" id="AL161517">
    <property type="status" value="NOT_ANNOTATED_CDS"/>
    <property type="molecule type" value="Genomic_DNA"/>
</dbReference>
<dbReference type="EMBL" id="CP002687">
    <property type="protein sequence ID" value="AEE82903.2"/>
    <property type="molecule type" value="Genomic_DNA"/>
</dbReference>
<dbReference type="RefSeq" id="NP_001319894.1">
    <property type="nucleotide sequence ID" value="NM_001340678.1"/>
</dbReference>
<dbReference type="SMR" id="P82717"/>
<dbReference type="STRING" id="3702.P82717"/>
<dbReference type="GlyCosmos" id="P82717">
    <property type="glycosylation" value="2 sites, No reported glycans"/>
</dbReference>
<dbReference type="GlyGen" id="P82717">
    <property type="glycosylation" value="2 sites"/>
</dbReference>
<dbReference type="PaxDb" id="3702-AT4G10595.1"/>
<dbReference type="ProteomicsDB" id="224087"/>
<dbReference type="EnsemblPlants" id="AT4G10595.1">
    <property type="protein sequence ID" value="AT4G10595.1"/>
    <property type="gene ID" value="AT4G10595"/>
</dbReference>
<dbReference type="GeneID" id="3769813"/>
<dbReference type="Gramene" id="AT4G10595.1">
    <property type="protein sequence ID" value="AT4G10595.1"/>
    <property type="gene ID" value="AT4G10595"/>
</dbReference>
<dbReference type="KEGG" id="ath:AT4G10595"/>
<dbReference type="Araport" id="AT4G10595"/>
<dbReference type="TAIR" id="AT4G10595">
    <property type="gene designation" value="LCR2"/>
</dbReference>
<dbReference type="HOGENOM" id="CLU_182511_0_0_1"/>
<dbReference type="InParanoid" id="P82717"/>
<dbReference type="OMA" id="CESKCRQ"/>
<dbReference type="PhylomeDB" id="P82717"/>
<dbReference type="PRO" id="PR:P82717"/>
<dbReference type="Proteomes" id="UP000006548">
    <property type="component" value="Chromosome 4"/>
</dbReference>
<dbReference type="ExpressionAtlas" id="P82717">
    <property type="expression patterns" value="baseline and differential"/>
</dbReference>
<dbReference type="GO" id="GO:0005576">
    <property type="term" value="C:extracellular region"/>
    <property type="evidence" value="ECO:0007669"/>
    <property type="project" value="UniProtKB-SubCell"/>
</dbReference>
<dbReference type="GO" id="GO:0050832">
    <property type="term" value="P:defense response to fungus"/>
    <property type="evidence" value="ECO:0007669"/>
    <property type="project" value="UniProtKB-KW"/>
</dbReference>
<dbReference type="GO" id="GO:0031640">
    <property type="term" value="P:killing of cells of another organism"/>
    <property type="evidence" value="ECO:0007669"/>
    <property type="project" value="UniProtKB-KW"/>
</dbReference>
<dbReference type="InterPro" id="IPR010851">
    <property type="entry name" value="DEFL"/>
</dbReference>
<dbReference type="PANTHER" id="PTHR34783">
    <property type="entry name" value="DEFENSIN-LIKE PROTEIN 144-RELATED"/>
    <property type="match status" value="1"/>
</dbReference>
<dbReference type="PANTHER" id="PTHR34783:SF1">
    <property type="entry name" value="DEFENSIN-LIKE PROTEIN 144-RELATED"/>
    <property type="match status" value="1"/>
</dbReference>
<dbReference type="Pfam" id="PF07333">
    <property type="entry name" value="SLR1-BP"/>
    <property type="match status" value="1"/>
</dbReference>
<gene>
    <name type="primary">LCR2</name>
    <name type="ordered locus">At4g10595</name>
    <name type="ORF">T4F9</name>
</gene>
<evidence type="ECO:0000250" key="1"/>
<evidence type="ECO:0000255" key="2"/>
<evidence type="ECO:0000255" key="3">
    <source>
        <dbReference type="PROSITE-ProRule" id="PRU00498"/>
    </source>
</evidence>
<evidence type="ECO:0000305" key="4"/>
<feature type="signal peptide" evidence="2">
    <location>
        <begin position="1"/>
        <end position="26"/>
    </location>
</feature>
<feature type="chain" id="PRO_0000017245" description="Putative defensin-like protein 145">
    <location>
        <begin position="27"/>
        <end position="91"/>
    </location>
</feature>
<feature type="glycosylation site" description="N-linked (GlcNAc...) asparagine" evidence="3">
    <location>
        <position position="35"/>
    </location>
</feature>
<feature type="glycosylation site" description="N-linked (GlcNAc...) asparagine" evidence="3">
    <location>
        <position position="68"/>
    </location>
</feature>
<feature type="disulfide bond" evidence="1">
    <location>
        <begin position="39"/>
        <end position="84"/>
    </location>
</feature>
<feature type="disulfide bond" evidence="1">
    <location>
        <begin position="52"/>
        <end position="74"/>
    </location>
</feature>
<feature type="disulfide bond" evidence="1">
    <location>
        <begin position="57"/>
        <end position="78"/>
    </location>
</feature>
<feature type="disulfide bond" evidence="1">
    <location>
        <begin position="61"/>
        <end position="80"/>
    </location>
</feature>
<sequence>MNKNIIFSFTVLTLFVIFVQVTGVIGNLQQRRQMNQTWCSRPLLTHKQTGKCVIEDCESKCRQKWKGNGTQATCRNQCNCHFRCPWIQGQP</sequence>
<organism evidence="4">
    <name type="scientific">Arabidopsis thaliana</name>
    <name type="common">Mouse-ear cress</name>
    <dbReference type="NCBI Taxonomy" id="3702"/>
    <lineage>
        <taxon>Eukaryota</taxon>
        <taxon>Viridiplantae</taxon>
        <taxon>Streptophyta</taxon>
        <taxon>Embryophyta</taxon>
        <taxon>Tracheophyta</taxon>
        <taxon>Spermatophyta</taxon>
        <taxon>Magnoliopsida</taxon>
        <taxon>eudicotyledons</taxon>
        <taxon>Gunneridae</taxon>
        <taxon>Pentapetalae</taxon>
        <taxon>rosids</taxon>
        <taxon>malvids</taxon>
        <taxon>Brassicales</taxon>
        <taxon>Brassicaceae</taxon>
        <taxon>Camelineae</taxon>
        <taxon>Arabidopsis</taxon>
    </lineage>
</organism>
<protein>
    <recommendedName>
        <fullName>Putative defensin-like protein 145</fullName>
    </recommendedName>
    <alternativeName>
        <fullName>Putative low-molecular-weight cysteine-rich protein 2</fullName>
        <shortName>Protein LCR2</shortName>
    </alternativeName>
</protein>